<keyword id="KW-0687">Ribonucleoprotein</keyword>
<keyword id="KW-0689">Ribosomal protein</keyword>
<sequence length="102" mass="11670">MAKEKIRIRLKAYDHRILDQSADKIVETAKRSGATVSGPIPLPTEKTVYTILRAVHKYKDSREQFEMRTHKRLIDIVSPTPQTVDSLMRLDLPSGVDIEIKL</sequence>
<proteinExistence type="inferred from homology"/>
<gene>
    <name evidence="1" type="primary">rpsJ</name>
    <name type="ordered locus">BAMEG_0125</name>
</gene>
<reference key="1">
    <citation type="submission" date="2008-10" db="EMBL/GenBank/DDBJ databases">
        <title>Genome sequence of Bacillus anthracis str. CDC 684.</title>
        <authorList>
            <person name="Dodson R.J."/>
            <person name="Munk A.C."/>
            <person name="Brettin T."/>
            <person name="Bruce D."/>
            <person name="Detter C."/>
            <person name="Tapia R."/>
            <person name="Han C."/>
            <person name="Sutton G."/>
            <person name="Sims D."/>
        </authorList>
    </citation>
    <scope>NUCLEOTIDE SEQUENCE [LARGE SCALE GENOMIC DNA]</scope>
    <source>
        <strain>CDC 684 / NRRL 3495</strain>
    </source>
</reference>
<accession>C3LJ81</accession>
<evidence type="ECO:0000255" key="1">
    <source>
        <dbReference type="HAMAP-Rule" id="MF_00508"/>
    </source>
</evidence>
<evidence type="ECO:0000305" key="2"/>
<dbReference type="EMBL" id="CP001215">
    <property type="protein sequence ID" value="ACP12499.1"/>
    <property type="molecule type" value="Genomic_DNA"/>
</dbReference>
<dbReference type="RefSeq" id="WP_001040594.1">
    <property type="nucleotide sequence ID" value="NC_012581.1"/>
</dbReference>
<dbReference type="SMR" id="C3LJ81"/>
<dbReference type="GeneID" id="45020154"/>
<dbReference type="KEGG" id="bah:BAMEG_0125"/>
<dbReference type="HOGENOM" id="CLU_122625_1_3_9"/>
<dbReference type="GO" id="GO:1990904">
    <property type="term" value="C:ribonucleoprotein complex"/>
    <property type="evidence" value="ECO:0007669"/>
    <property type="project" value="UniProtKB-KW"/>
</dbReference>
<dbReference type="GO" id="GO:0005840">
    <property type="term" value="C:ribosome"/>
    <property type="evidence" value="ECO:0007669"/>
    <property type="project" value="UniProtKB-KW"/>
</dbReference>
<dbReference type="GO" id="GO:0003735">
    <property type="term" value="F:structural constituent of ribosome"/>
    <property type="evidence" value="ECO:0007669"/>
    <property type="project" value="InterPro"/>
</dbReference>
<dbReference type="GO" id="GO:0000049">
    <property type="term" value="F:tRNA binding"/>
    <property type="evidence" value="ECO:0007669"/>
    <property type="project" value="UniProtKB-UniRule"/>
</dbReference>
<dbReference type="GO" id="GO:0006412">
    <property type="term" value="P:translation"/>
    <property type="evidence" value="ECO:0007669"/>
    <property type="project" value="UniProtKB-UniRule"/>
</dbReference>
<dbReference type="FunFam" id="3.30.70.600:FF:000001">
    <property type="entry name" value="30S ribosomal protein S10"/>
    <property type="match status" value="1"/>
</dbReference>
<dbReference type="Gene3D" id="3.30.70.600">
    <property type="entry name" value="Ribosomal protein S10 domain"/>
    <property type="match status" value="1"/>
</dbReference>
<dbReference type="HAMAP" id="MF_00508">
    <property type="entry name" value="Ribosomal_uS10"/>
    <property type="match status" value="1"/>
</dbReference>
<dbReference type="InterPro" id="IPR001848">
    <property type="entry name" value="Ribosomal_uS10"/>
</dbReference>
<dbReference type="InterPro" id="IPR018268">
    <property type="entry name" value="Ribosomal_uS10_CS"/>
</dbReference>
<dbReference type="InterPro" id="IPR027486">
    <property type="entry name" value="Ribosomal_uS10_dom"/>
</dbReference>
<dbReference type="InterPro" id="IPR036838">
    <property type="entry name" value="Ribosomal_uS10_dom_sf"/>
</dbReference>
<dbReference type="NCBIfam" id="NF001861">
    <property type="entry name" value="PRK00596.1"/>
    <property type="match status" value="1"/>
</dbReference>
<dbReference type="NCBIfam" id="TIGR01049">
    <property type="entry name" value="rpsJ_bact"/>
    <property type="match status" value="1"/>
</dbReference>
<dbReference type="PANTHER" id="PTHR11700">
    <property type="entry name" value="30S RIBOSOMAL PROTEIN S10 FAMILY MEMBER"/>
    <property type="match status" value="1"/>
</dbReference>
<dbReference type="Pfam" id="PF00338">
    <property type="entry name" value="Ribosomal_S10"/>
    <property type="match status" value="1"/>
</dbReference>
<dbReference type="PRINTS" id="PR00971">
    <property type="entry name" value="RIBOSOMALS10"/>
</dbReference>
<dbReference type="SMART" id="SM01403">
    <property type="entry name" value="Ribosomal_S10"/>
    <property type="match status" value="1"/>
</dbReference>
<dbReference type="SUPFAM" id="SSF54999">
    <property type="entry name" value="Ribosomal protein S10"/>
    <property type="match status" value="1"/>
</dbReference>
<dbReference type="PROSITE" id="PS00361">
    <property type="entry name" value="RIBOSOMAL_S10"/>
    <property type="match status" value="1"/>
</dbReference>
<feature type="chain" id="PRO_1000196284" description="Small ribosomal subunit protein uS10">
    <location>
        <begin position="1"/>
        <end position="102"/>
    </location>
</feature>
<name>RS10_BACAC</name>
<protein>
    <recommendedName>
        <fullName evidence="1">Small ribosomal subunit protein uS10</fullName>
    </recommendedName>
    <alternativeName>
        <fullName evidence="2">30S ribosomal protein S10</fullName>
    </alternativeName>
</protein>
<organism>
    <name type="scientific">Bacillus anthracis (strain CDC 684 / NRRL 3495)</name>
    <dbReference type="NCBI Taxonomy" id="568206"/>
    <lineage>
        <taxon>Bacteria</taxon>
        <taxon>Bacillati</taxon>
        <taxon>Bacillota</taxon>
        <taxon>Bacilli</taxon>
        <taxon>Bacillales</taxon>
        <taxon>Bacillaceae</taxon>
        <taxon>Bacillus</taxon>
        <taxon>Bacillus cereus group</taxon>
    </lineage>
</organism>
<comment type="function">
    <text evidence="1">Involved in the binding of tRNA to the ribosomes.</text>
</comment>
<comment type="subunit">
    <text evidence="1">Part of the 30S ribosomal subunit.</text>
</comment>
<comment type="similarity">
    <text evidence="1">Belongs to the universal ribosomal protein uS10 family.</text>
</comment>